<accession>Q62MP0</accession>
<name>SYDND_BURMA</name>
<proteinExistence type="inferred from homology"/>
<dbReference type="EC" id="6.1.1.23" evidence="1"/>
<dbReference type="EMBL" id="CP000010">
    <property type="protein sequence ID" value="AAU49011.1"/>
    <property type="status" value="ALT_INIT"/>
    <property type="molecule type" value="Genomic_DNA"/>
</dbReference>
<dbReference type="RefSeq" id="YP_102028.1">
    <property type="nucleotide sequence ID" value="NC_006348.1"/>
</dbReference>
<dbReference type="SMR" id="Q62MP0"/>
<dbReference type="KEGG" id="bma:BMA0193"/>
<dbReference type="PATRIC" id="fig|243160.12.peg.192"/>
<dbReference type="eggNOG" id="COG0173">
    <property type="taxonomic scope" value="Bacteria"/>
</dbReference>
<dbReference type="HOGENOM" id="CLU_014330_3_2_4"/>
<dbReference type="Proteomes" id="UP000006693">
    <property type="component" value="Chromosome 1"/>
</dbReference>
<dbReference type="GO" id="GO:0005737">
    <property type="term" value="C:cytoplasm"/>
    <property type="evidence" value="ECO:0007669"/>
    <property type="project" value="UniProtKB-SubCell"/>
</dbReference>
<dbReference type="GO" id="GO:0004815">
    <property type="term" value="F:aspartate-tRNA ligase activity"/>
    <property type="evidence" value="ECO:0007669"/>
    <property type="project" value="UniProtKB-UniRule"/>
</dbReference>
<dbReference type="GO" id="GO:0050560">
    <property type="term" value="F:aspartate-tRNA(Asn) ligase activity"/>
    <property type="evidence" value="ECO:0007669"/>
    <property type="project" value="UniProtKB-EC"/>
</dbReference>
<dbReference type="GO" id="GO:0005524">
    <property type="term" value="F:ATP binding"/>
    <property type="evidence" value="ECO:0007669"/>
    <property type="project" value="UniProtKB-UniRule"/>
</dbReference>
<dbReference type="GO" id="GO:0003676">
    <property type="term" value="F:nucleic acid binding"/>
    <property type="evidence" value="ECO:0007669"/>
    <property type="project" value="InterPro"/>
</dbReference>
<dbReference type="GO" id="GO:0006422">
    <property type="term" value="P:aspartyl-tRNA aminoacylation"/>
    <property type="evidence" value="ECO:0007669"/>
    <property type="project" value="UniProtKB-UniRule"/>
</dbReference>
<dbReference type="CDD" id="cd00777">
    <property type="entry name" value="AspRS_core"/>
    <property type="match status" value="1"/>
</dbReference>
<dbReference type="CDD" id="cd04317">
    <property type="entry name" value="EcAspRS_like_N"/>
    <property type="match status" value="1"/>
</dbReference>
<dbReference type="Gene3D" id="3.30.930.10">
    <property type="entry name" value="Bira Bifunctional Protein, Domain 2"/>
    <property type="match status" value="1"/>
</dbReference>
<dbReference type="Gene3D" id="3.30.1360.30">
    <property type="entry name" value="GAD-like domain"/>
    <property type="match status" value="1"/>
</dbReference>
<dbReference type="Gene3D" id="2.40.50.140">
    <property type="entry name" value="Nucleic acid-binding proteins"/>
    <property type="match status" value="1"/>
</dbReference>
<dbReference type="HAMAP" id="MF_00044">
    <property type="entry name" value="Asp_tRNA_synth_type1"/>
    <property type="match status" value="1"/>
</dbReference>
<dbReference type="InterPro" id="IPR004364">
    <property type="entry name" value="Aa-tRNA-synt_II"/>
</dbReference>
<dbReference type="InterPro" id="IPR006195">
    <property type="entry name" value="aa-tRNA-synth_II"/>
</dbReference>
<dbReference type="InterPro" id="IPR045864">
    <property type="entry name" value="aa-tRNA-synth_II/BPL/LPL"/>
</dbReference>
<dbReference type="InterPro" id="IPR004524">
    <property type="entry name" value="Asp-tRNA-ligase_1"/>
</dbReference>
<dbReference type="InterPro" id="IPR047089">
    <property type="entry name" value="Asp-tRNA-ligase_1_N"/>
</dbReference>
<dbReference type="InterPro" id="IPR002312">
    <property type="entry name" value="Asp/Asn-tRNA-synth_IIb"/>
</dbReference>
<dbReference type="InterPro" id="IPR047090">
    <property type="entry name" value="AspRS_core"/>
</dbReference>
<dbReference type="InterPro" id="IPR004115">
    <property type="entry name" value="GAD-like_sf"/>
</dbReference>
<dbReference type="InterPro" id="IPR029351">
    <property type="entry name" value="GAD_dom"/>
</dbReference>
<dbReference type="InterPro" id="IPR012340">
    <property type="entry name" value="NA-bd_OB-fold"/>
</dbReference>
<dbReference type="InterPro" id="IPR004365">
    <property type="entry name" value="NA-bd_OB_tRNA"/>
</dbReference>
<dbReference type="NCBIfam" id="TIGR00459">
    <property type="entry name" value="aspS_bact"/>
    <property type="match status" value="1"/>
</dbReference>
<dbReference type="NCBIfam" id="NF001750">
    <property type="entry name" value="PRK00476.1"/>
    <property type="match status" value="1"/>
</dbReference>
<dbReference type="PANTHER" id="PTHR22594:SF5">
    <property type="entry name" value="ASPARTATE--TRNA LIGASE, MITOCHONDRIAL"/>
    <property type="match status" value="1"/>
</dbReference>
<dbReference type="PANTHER" id="PTHR22594">
    <property type="entry name" value="ASPARTYL/LYSYL-TRNA SYNTHETASE"/>
    <property type="match status" value="1"/>
</dbReference>
<dbReference type="Pfam" id="PF02938">
    <property type="entry name" value="GAD"/>
    <property type="match status" value="1"/>
</dbReference>
<dbReference type="Pfam" id="PF00152">
    <property type="entry name" value="tRNA-synt_2"/>
    <property type="match status" value="1"/>
</dbReference>
<dbReference type="Pfam" id="PF01336">
    <property type="entry name" value="tRNA_anti-codon"/>
    <property type="match status" value="1"/>
</dbReference>
<dbReference type="PRINTS" id="PR01042">
    <property type="entry name" value="TRNASYNTHASP"/>
</dbReference>
<dbReference type="SUPFAM" id="SSF55681">
    <property type="entry name" value="Class II aaRS and biotin synthetases"/>
    <property type="match status" value="1"/>
</dbReference>
<dbReference type="SUPFAM" id="SSF55261">
    <property type="entry name" value="GAD domain-like"/>
    <property type="match status" value="1"/>
</dbReference>
<dbReference type="SUPFAM" id="SSF50249">
    <property type="entry name" value="Nucleic acid-binding proteins"/>
    <property type="match status" value="1"/>
</dbReference>
<dbReference type="PROSITE" id="PS50862">
    <property type="entry name" value="AA_TRNA_LIGASE_II"/>
    <property type="match status" value="1"/>
</dbReference>
<protein>
    <recommendedName>
        <fullName evidence="1">Aspartate--tRNA(Asp/Asn) ligase</fullName>
        <ecNumber evidence="1">6.1.1.23</ecNumber>
    </recommendedName>
    <alternativeName>
        <fullName evidence="1">Aspartyl-tRNA synthetase</fullName>
        <shortName evidence="1">AspRS</shortName>
    </alternativeName>
    <alternativeName>
        <fullName evidence="1">Non-discriminating aspartyl-tRNA synthetase</fullName>
        <shortName evidence="1">ND-AspRS</shortName>
    </alternativeName>
</protein>
<organism>
    <name type="scientific">Burkholderia mallei (strain ATCC 23344)</name>
    <dbReference type="NCBI Taxonomy" id="243160"/>
    <lineage>
        <taxon>Bacteria</taxon>
        <taxon>Pseudomonadati</taxon>
        <taxon>Pseudomonadota</taxon>
        <taxon>Betaproteobacteria</taxon>
        <taxon>Burkholderiales</taxon>
        <taxon>Burkholderiaceae</taxon>
        <taxon>Burkholderia</taxon>
        <taxon>pseudomallei group</taxon>
    </lineage>
</organism>
<sequence length="598" mass="67462">MRTEYCGLVTEHLLGQTVSLCGWVHRRRDHGGVIFIDLRDREGLVQVVCDPDRAEMFAAAEGVRNEFCIQVKGLVRGRPEGTINAGLKSGRIEVLCHELNVLNASVTPPFQLDDDNLSETTRLTHRVLDLRRPQMQHNLRLRYRVAIEARKYLDEQGFIDIETPMLTKSTPEGARDYLVPSRVNAGQFFALPQSPQLFKQLLMVANFDRYYQITKCFRDEDLRADRQPEFTQIDCETSFLGEQEIRDLFEDMIRHIFKTTIGVELDATFPVMPYSEAMARFGSDKPDLRVKLEFTELTDAMKDVDFKVFSTPANTKDGRVAALRVPKGGELTRGDIDGYTEFVRIYGAKGLAWIKVNERAKGRDGLQSPIVKNLHDASIAAILERTGAQDGDIIFFAADRAKVVNDSLGALRLKIGHSEFGKANGLVEAGWKPLWVVDFPMFEYDDEEARYVAAHHPFTSPKDEHLEYLETDPGRCLAKAYDMVLNGWEIGGGSVRIHREEVQSKVFRALKIGPEEAQAKFGFLLDALQYGAPPHGGIAFGLDRIVTMMAGADSIRDVIAFPKTQRAQCLLTQAPSPVDERQLRELHIRLRQPEQPKA</sequence>
<comment type="function">
    <text evidence="1">Aspartyl-tRNA synthetase with relaxed tRNA specificity since it is able to aspartylate not only its cognate tRNA(Asp) but also tRNA(Asn). Reaction proceeds in two steps: L-aspartate is first activated by ATP to form Asp-AMP and then transferred to the acceptor end of tRNA(Asp/Asn).</text>
</comment>
<comment type="catalytic activity">
    <reaction evidence="1">
        <text>tRNA(Asx) + L-aspartate + ATP = L-aspartyl-tRNA(Asx) + AMP + diphosphate</text>
        <dbReference type="Rhea" id="RHEA:18349"/>
        <dbReference type="Rhea" id="RHEA-COMP:9710"/>
        <dbReference type="Rhea" id="RHEA-COMP:9711"/>
        <dbReference type="ChEBI" id="CHEBI:29991"/>
        <dbReference type="ChEBI" id="CHEBI:30616"/>
        <dbReference type="ChEBI" id="CHEBI:33019"/>
        <dbReference type="ChEBI" id="CHEBI:78442"/>
        <dbReference type="ChEBI" id="CHEBI:78516"/>
        <dbReference type="ChEBI" id="CHEBI:456215"/>
        <dbReference type="EC" id="6.1.1.23"/>
    </reaction>
</comment>
<comment type="subunit">
    <text evidence="1">Homodimer.</text>
</comment>
<comment type="subcellular location">
    <subcellularLocation>
        <location evidence="1">Cytoplasm</location>
    </subcellularLocation>
</comment>
<comment type="similarity">
    <text evidence="1">Belongs to the class-II aminoacyl-tRNA synthetase family. Type 1 subfamily.</text>
</comment>
<comment type="sequence caution" evidence="2">
    <conflict type="erroneous initiation">
        <sequence resource="EMBL-CDS" id="AAU49011"/>
    </conflict>
</comment>
<feature type="chain" id="PRO_0000110846" description="Aspartate--tRNA(Asp/Asn) ligase">
    <location>
        <begin position="1"/>
        <end position="598"/>
    </location>
</feature>
<feature type="region of interest" description="Aspartate" evidence="1">
    <location>
        <begin position="196"/>
        <end position="199"/>
    </location>
</feature>
<feature type="binding site" evidence="1">
    <location>
        <position position="172"/>
    </location>
    <ligand>
        <name>L-aspartate</name>
        <dbReference type="ChEBI" id="CHEBI:29991"/>
    </ligand>
</feature>
<feature type="binding site" evidence="1">
    <location>
        <begin position="218"/>
        <end position="220"/>
    </location>
    <ligand>
        <name>ATP</name>
        <dbReference type="ChEBI" id="CHEBI:30616"/>
    </ligand>
</feature>
<feature type="binding site" evidence="1">
    <location>
        <position position="218"/>
    </location>
    <ligand>
        <name>L-aspartate</name>
        <dbReference type="ChEBI" id="CHEBI:29991"/>
    </ligand>
</feature>
<feature type="binding site" evidence="1">
    <location>
        <position position="227"/>
    </location>
    <ligand>
        <name>ATP</name>
        <dbReference type="ChEBI" id="CHEBI:30616"/>
    </ligand>
</feature>
<feature type="binding site" evidence="1">
    <location>
        <position position="455"/>
    </location>
    <ligand>
        <name>L-aspartate</name>
        <dbReference type="ChEBI" id="CHEBI:29991"/>
    </ligand>
</feature>
<feature type="binding site" evidence="1">
    <location>
        <position position="489"/>
    </location>
    <ligand>
        <name>ATP</name>
        <dbReference type="ChEBI" id="CHEBI:30616"/>
    </ligand>
</feature>
<feature type="binding site" evidence="1">
    <location>
        <position position="496"/>
    </location>
    <ligand>
        <name>L-aspartate</name>
        <dbReference type="ChEBI" id="CHEBI:29991"/>
    </ligand>
</feature>
<feature type="binding site" evidence="1">
    <location>
        <begin position="541"/>
        <end position="544"/>
    </location>
    <ligand>
        <name>ATP</name>
        <dbReference type="ChEBI" id="CHEBI:30616"/>
    </ligand>
</feature>
<feature type="site" description="Important for tRNA non-discrimination" evidence="1">
    <location>
        <position position="30"/>
    </location>
</feature>
<feature type="site" description="Important for tRNA non-discrimination" evidence="1">
    <location>
        <position position="81"/>
    </location>
</feature>
<keyword id="KW-0030">Aminoacyl-tRNA synthetase</keyword>
<keyword id="KW-0067">ATP-binding</keyword>
<keyword id="KW-0963">Cytoplasm</keyword>
<keyword id="KW-0436">Ligase</keyword>
<keyword id="KW-0547">Nucleotide-binding</keyword>
<keyword id="KW-0648">Protein biosynthesis</keyword>
<keyword id="KW-1185">Reference proteome</keyword>
<gene>
    <name evidence="1" type="primary">aspS</name>
    <name type="ordered locus">BMA0193</name>
</gene>
<evidence type="ECO:0000255" key="1">
    <source>
        <dbReference type="HAMAP-Rule" id="MF_00044"/>
    </source>
</evidence>
<evidence type="ECO:0000305" key="2"/>
<reference key="1">
    <citation type="journal article" date="2004" name="Proc. Natl. Acad. Sci. U.S.A.">
        <title>Structural flexibility in the Burkholderia mallei genome.</title>
        <authorList>
            <person name="Nierman W.C."/>
            <person name="DeShazer D."/>
            <person name="Kim H.S."/>
            <person name="Tettelin H."/>
            <person name="Nelson K.E."/>
            <person name="Feldblyum T.V."/>
            <person name="Ulrich R.L."/>
            <person name="Ronning C.M."/>
            <person name="Brinkac L.M."/>
            <person name="Daugherty S.C."/>
            <person name="Davidsen T.D."/>
            <person name="DeBoy R.T."/>
            <person name="Dimitrov G."/>
            <person name="Dodson R.J."/>
            <person name="Durkin A.S."/>
            <person name="Gwinn M.L."/>
            <person name="Haft D.H."/>
            <person name="Khouri H.M."/>
            <person name="Kolonay J.F."/>
            <person name="Madupu R."/>
            <person name="Mohammoud Y."/>
            <person name="Nelson W.C."/>
            <person name="Radune D."/>
            <person name="Romero C.M."/>
            <person name="Sarria S."/>
            <person name="Selengut J."/>
            <person name="Shamblin C."/>
            <person name="Sullivan S.A."/>
            <person name="White O."/>
            <person name="Yu Y."/>
            <person name="Zafar N."/>
            <person name="Zhou L."/>
            <person name="Fraser C.M."/>
        </authorList>
    </citation>
    <scope>NUCLEOTIDE SEQUENCE [LARGE SCALE GENOMIC DNA]</scope>
    <source>
        <strain>ATCC 23344</strain>
    </source>
</reference>